<reference key="1">
    <citation type="journal article" date="2006" name="Proc. Natl. Acad. Sci. U.S.A.">
        <title>Comparative genomics of the lactic acid bacteria.</title>
        <authorList>
            <person name="Makarova K.S."/>
            <person name="Slesarev A."/>
            <person name="Wolf Y.I."/>
            <person name="Sorokin A."/>
            <person name="Mirkin B."/>
            <person name="Koonin E.V."/>
            <person name="Pavlov A."/>
            <person name="Pavlova N."/>
            <person name="Karamychev V."/>
            <person name="Polouchine N."/>
            <person name="Shakhova V."/>
            <person name="Grigoriev I."/>
            <person name="Lou Y."/>
            <person name="Rohksar D."/>
            <person name="Lucas S."/>
            <person name="Huang K."/>
            <person name="Goodstein D.M."/>
            <person name="Hawkins T."/>
            <person name="Plengvidhya V."/>
            <person name="Welker D."/>
            <person name="Hughes J."/>
            <person name="Goh Y."/>
            <person name="Benson A."/>
            <person name="Baldwin K."/>
            <person name="Lee J.-H."/>
            <person name="Diaz-Muniz I."/>
            <person name="Dosti B."/>
            <person name="Smeianov V."/>
            <person name="Wechter W."/>
            <person name="Barabote R."/>
            <person name="Lorca G."/>
            <person name="Altermann E."/>
            <person name="Barrangou R."/>
            <person name="Ganesan B."/>
            <person name="Xie Y."/>
            <person name="Rawsthorne H."/>
            <person name="Tamir D."/>
            <person name="Parker C."/>
            <person name="Breidt F."/>
            <person name="Broadbent J.R."/>
            <person name="Hutkins R."/>
            <person name="O'Sullivan D."/>
            <person name="Steele J."/>
            <person name="Unlu G."/>
            <person name="Saier M.H. Jr."/>
            <person name="Klaenhammer T."/>
            <person name="Richardson P."/>
            <person name="Kozyavkin S."/>
            <person name="Weimer B.C."/>
            <person name="Mills D.A."/>
        </authorList>
    </citation>
    <scope>NUCLEOTIDE SEQUENCE [LARGE SCALE GENOMIC DNA]</scope>
    <source>
        <strain>ATCC BAA-365 / Lb-18</strain>
    </source>
</reference>
<evidence type="ECO:0000255" key="1">
    <source>
        <dbReference type="HAMAP-Rule" id="MF_00129"/>
    </source>
</evidence>
<evidence type="ECO:0000256" key="2">
    <source>
        <dbReference type="SAM" id="MobiDB-lite"/>
    </source>
</evidence>
<sequence>MKTYVSNEYDVIVVGAGHAGCEAALASARMGEKTLLLTISLDMVAFMPCNPSVGGPAKGTVVREIDALGGEMGKNIDKTYIQMRMLNTGKGPAVRALRAQADKWDYHEEMKRTIENTPNLTLRQAVVDDLIVEDGECRGVVTNTGARYRAKSVVLTTGTAARGRIFIGELNYSSGPNNTIPAIKLSESLERLGFKLRRFKTGTPPRVNRHTIDYSKTEEEPGDKEPRHFSFTSRDEDYLTDQTSCWMTYTNPKTHEIINENLDRSPMFSGDIVGVGPRYCPSIETKVVRFADKDRHQIFLEPEGRKTEEIYVGDFSTSMPEEVQLEMLHTVAGLEKVEMMRPGYAIEYDVVDPWQLTHTLETKRIKHLYTAGQMNGTSGYEEAAGQGLIAGINAALSAEGKPAFTLGRDEAYIGVLIDDLVTKGTEEPYRLLTSRAEYRLLLRHDNADLRLTEKGHDLGLIDDDRYAEFLAKKELIQEDLDRLGEITVHPTIAVNEYLAGLGQTDLNGGVKADVFLRRPRVTVEDVERLTGQKLAGDRYVKEQVEIDIKYAGYIKKQEIQVARLRRQEAKKIPKDIDYDQIEGLATEAREKLAKIRPETLAQAERISGVNPADLAILSVYVQNGKYAKVQK</sequence>
<name>MNMG_LACDB</name>
<protein>
    <recommendedName>
        <fullName evidence="1">tRNA uridine 5-carboxymethylaminomethyl modification enzyme MnmG</fullName>
    </recommendedName>
    <alternativeName>
        <fullName evidence="1">Glucose-inhibited division protein A</fullName>
    </alternativeName>
</protein>
<feature type="chain" id="PRO_1000016614" description="tRNA uridine 5-carboxymethylaminomethyl modification enzyme MnmG">
    <location>
        <begin position="1"/>
        <end position="631"/>
    </location>
</feature>
<feature type="region of interest" description="Disordered" evidence="2">
    <location>
        <begin position="214"/>
        <end position="233"/>
    </location>
</feature>
<feature type="binding site" evidence="1">
    <location>
        <begin position="15"/>
        <end position="20"/>
    </location>
    <ligand>
        <name>FAD</name>
        <dbReference type="ChEBI" id="CHEBI:57692"/>
    </ligand>
</feature>
<feature type="binding site" evidence="1">
    <location>
        <begin position="276"/>
        <end position="290"/>
    </location>
    <ligand>
        <name>NAD(+)</name>
        <dbReference type="ChEBI" id="CHEBI:57540"/>
    </ligand>
</feature>
<keyword id="KW-0963">Cytoplasm</keyword>
<keyword id="KW-0274">FAD</keyword>
<keyword id="KW-0285">Flavoprotein</keyword>
<keyword id="KW-0520">NAD</keyword>
<keyword id="KW-0819">tRNA processing</keyword>
<comment type="function">
    <text evidence="1">NAD-binding protein involved in the addition of a carboxymethylaminomethyl (cmnm) group at the wobble position (U34) of certain tRNAs, forming tRNA-cmnm(5)s(2)U34.</text>
</comment>
<comment type="cofactor">
    <cofactor evidence="1">
        <name>FAD</name>
        <dbReference type="ChEBI" id="CHEBI:57692"/>
    </cofactor>
</comment>
<comment type="subunit">
    <text evidence="1">Homodimer. Heterotetramer of two MnmE and two MnmG subunits.</text>
</comment>
<comment type="subcellular location">
    <subcellularLocation>
        <location evidence="1">Cytoplasm</location>
    </subcellularLocation>
</comment>
<comment type="similarity">
    <text evidence="1">Belongs to the MnmG family.</text>
</comment>
<accession>Q047G0</accession>
<proteinExistence type="inferred from homology"/>
<gene>
    <name evidence="1" type="primary">mnmG</name>
    <name evidence="1" type="synonym">gidA</name>
    <name type="ordered locus">LBUL_2035</name>
</gene>
<dbReference type="EMBL" id="CP000412">
    <property type="protein sequence ID" value="ABJ59412.1"/>
    <property type="molecule type" value="Genomic_DNA"/>
</dbReference>
<dbReference type="RefSeq" id="WP_003622150.1">
    <property type="nucleotide sequence ID" value="NC_008529.1"/>
</dbReference>
<dbReference type="SMR" id="Q047G0"/>
<dbReference type="KEGG" id="lbu:LBUL_2035"/>
<dbReference type="HOGENOM" id="CLU_007831_2_2_9"/>
<dbReference type="BioCyc" id="LDEL321956:LBUL_RS09630-MONOMER"/>
<dbReference type="GO" id="GO:0005829">
    <property type="term" value="C:cytosol"/>
    <property type="evidence" value="ECO:0007669"/>
    <property type="project" value="TreeGrafter"/>
</dbReference>
<dbReference type="GO" id="GO:0050660">
    <property type="term" value="F:flavin adenine dinucleotide binding"/>
    <property type="evidence" value="ECO:0007669"/>
    <property type="project" value="UniProtKB-UniRule"/>
</dbReference>
<dbReference type="GO" id="GO:0030488">
    <property type="term" value="P:tRNA methylation"/>
    <property type="evidence" value="ECO:0007669"/>
    <property type="project" value="TreeGrafter"/>
</dbReference>
<dbReference type="GO" id="GO:0002098">
    <property type="term" value="P:tRNA wobble uridine modification"/>
    <property type="evidence" value="ECO:0007669"/>
    <property type="project" value="InterPro"/>
</dbReference>
<dbReference type="FunFam" id="1.10.10.1800:FF:000001">
    <property type="entry name" value="tRNA uridine 5-carboxymethylaminomethyl modification enzyme MnmG"/>
    <property type="match status" value="1"/>
</dbReference>
<dbReference type="FunFam" id="1.10.150.570:FF:000001">
    <property type="entry name" value="tRNA uridine 5-carboxymethylaminomethyl modification enzyme MnmG"/>
    <property type="match status" value="1"/>
</dbReference>
<dbReference type="FunFam" id="3.50.50.60:FF:000002">
    <property type="entry name" value="tRNA uridine 5-carboxymethylaminomethyl modification enzyme MnmG"/>
    <property type="match status" value="1"/>
</dbReference>
<dbReference type="FunFam" id="3.50.50.60:FF:000063">
    <property type="entry name" value="tRNA uridine 5-carboxymethylaminomethyl modification enzyme MnmG"/>
    <property type="match status" value="1"/>
</dbReference>
<dbReference type="Gene3D" id="3.50.50.60">
    <property type="entry name" value="FAD/NAD(P)-binding domain"/>
    <property type="match status" value="2"/>
</dbReference>
<dbReference type="Gene3D" id="1.10.150.570">
    <property type="entry name" value="GidA associated domain, C-terminal subdomain"/>
    <property type="match status" value="1"/>
</dbReference>
<dbReference type="Gene3D" id="1.10.10.1800">
    <property type="entry name" value="tRNA uridine 5-carboxymethylaminomethyl modification enzyme MnmG/GidA"/>
    <property type="match status" value="1"/>
</dbReference>
<dbReference type="HAMAP" id="MF_00129">
    <property type="entry name" value="MnmG_GidA"/>
    <property type="match status" value="1"/>
</dbReference>
<dbReference type="InterPro" id="IPR036188">
    <property type="entry name" value="FAD/NAD-bd_sf"/>
</dbReference>
<dbReference type="InterPro" id="IPR049312">
    <property type="entry name" value="GIDA_C_N"/>
</dbReference>
<dbReference type="InterPro" id="IPR004416">
    <property type="entry name" value="MnmG"/>
</dbReference>
<dbReference type="InterPro" id="IPR002218">
    <property type="entry name" value="MnmG-rel"/>
</dbReference>
<dbReference type="InterPro" id="IPR020595">
    <property type="entry name" value="MnmG-rel_CS"/>
</dbReference>
<dbReference type="InterPro" id="IPR026904">
    <property type="entry name" value="MnmG_C"/>
</dbReference>
<dbReference type="InterPro" id="IPR047001">
    <property type="entry name" value="MnmG_C_subdom"/>
</dbReference>
<dbReference type="InterPro" id="IPR044920">
    <property type="entry name" value="MnmG_C_subdom_sf"/>
</dbReference>
<dbReference type="InterPro" id="IPR040131">
    <property type="entry name" value="MnmG_N"/>
</dbReference>
<dbReference type="NCBIfam" id="TIGR00136">
    <property type="entry name" value="mnmG_gidA"/>
    <property type="match status" value="1"/>
</dbReference>
<dbReference type="PANTHER" id="PTHR11806">
    <property type="entry name" value="GLUCOSE INHIBITED DIVISION PROTEIN A"/>
    <property type="match status" value="1"/>
</dbReference>
<dbReference type="PANTHER" id="PTHR11806:SF0">
    <property type="entry name" value="PROTEIN MTO1 HOMOLOG, MITOCHONDRIAL"/>
    <property type="match status" value="1"/>
</dbReference>
<dbReference type="Pfam" id="PF01134">
    <property type="entry name" value="GIDA"/>
    <property type="match status" value="1"/>
</dbReference>
<dbReference type="Pfam" id="PF21680">
    <property type="entry name" value="GIDA_C_1st"/>
    <property type="match status" value="1"/>
</dbReference>
<dbReference type="Pfam" id="PF13932">
    <property type="entry name" value="SAM_GIDA_C"/>
    <property type="match status" value="1"/>
</dbReference>
<dbReference type="PRINTS" id="PR00368">
    <property type="entry name" value="FADPNR"/>
</dbReference>
<dbReference type="PRINTS" id="PR00411">
    <property type="entry name" value="PNDRDTASEI"/>
</dbReference>
<dbReference type="SMART" id="SM01228">
    <property type="entry name" value="GIDA_assoc_3"/>
    <property type="match status" value="1"/>
</dbReference>
<dbReference type="SUPFAM" id="SSF51905">
    <property type="entry name" value="FAD/NAD(P)-binding domain"/>
    <property type="match status" value="1"/>
</dbReference>
<dbReference type="PROSITE" id="PS01280">
    <property type="entry name" value="GIDA_1"/>
    <property type="match status" value="1"/>
</dbReference>
<dbReference type="PROSITE" id="PS01281">
    <property type="entry name" value="GIDA_2"/>
    <property type="match status" value="1"/>
</dbReference>
<organism>
    <name type="scientific">Lactobacillus delbrueckii subsp. bulgaricus (strain ATCC BAA-365 / Lb-18)</name>
    <dbReference type="NCBI Taxonomy" id="321956"/>
    <lineage>
        <taxon>Bacteria</taxon>
        <taxon>Bacillati</taxon>
        <taxon>Bacillota</taxon>
        <taxon>Bacilli</taxon>
        <taxon>Lactobacillales</taxon>
        <taxon>Lactobacillaceae</taxon>
        <taxon>Lactobacillus</taxon>
    </lineage>
</organism>